<comment type="function">
    <text evidence="2">The physiological role of BioH is to remove the methyl group introduced by BioC when the pimeloyl moiety is complete. It allows to synthesize pimeloyl-ACP via the fatty acid synthetic pathway through the hydrolysis of the ester bonds of pimeloyl-ACP esters.</text>
</comment>
<comment type="catalytic activity">
    <reaction evidence="2">
        <text>6-carboxyhexanoyl-[ACP] methyl ester + H2O = 6-carboxyhexanoyl-[ACP] + methanol + H(+)</text>
        <dbReference type="Rhea" id="RHEA:42700"/>
        <dbReference type="Rhea" id="RHEA-COMP:9955"/>
        <dbReference type="Rhea" id="RHEA-COMP:10186"/>
        <dbReference type="ChEBI" id="CHEBI:15377"/>
        <dbReference type="ChEBI" id="CHEBI:15378"/>
        <dbReference type="ChEBI" id="CHEBI:17790"/>
        <dbReference type="ChEBI" id="CHEBI:78846"/>
        <dbReference type="ChEBI" id="CHEBI:82735"/>
        <dbReference type="EC" id="3.1.1.85"/>
    </reaction>
</comment>
<comment type="pathway">
    <text evidence="2">Cofactor biosynthesis; biotin biosynthesis.</text>
</comment>
<comment type="subunit">
    <text evidence="2">Monomer.</text>
</comment>
<comment type="subcellular location">
    <subcellularLocation>
        <location evidence="2">Cytoplasm</location>
    </subcellularLocation>
</comment>
<comment type="similarity">
    <text evidence="2">Belongs to the AB hydrolase superfamily. Carboxylesterase BioH family.</text>
</comment>
<sequence>MNDIWWQTYGEGNCHLVLLHGWGLNAEVWHCIREELGSHFTLHLVDLPGYGRSSGFGAMTLEEMTAQVAKNAPDQAIWLGWSLGGLVASQMALTHPERVQALVTVASSPCFSAREGWPGIKPEILGGFQQQLSDDFQRTVERFLALQTLGTETARQDARTLKSVVLAQPMPDVEVLNGGLEILKTVDLREALKNVNMPFLRLYGYLDGLVPRKMVPLLDTLWPHSTSQIMAKAAHAPFISHPAAFCQALMTLKSSL</sequence>
<evidence type="ECO:0000255" key="1"/>
<evidence type="ECO:0000255" key="2">
    <source>
        <dbReference type="HAMAP-Rule" id="MF_01260"/>
    </source>
</evidence>
<reference key="1">
    <citation type="journal article" date="2011" name="J. Bacteriol.">
        <title>Comparative genomics of 28 Salmonella enterica isolates: evidence for CRISPR-mediated adaptive sublineage evolution.</title>
        <authorList>
            <person name="Fricke W.F."/>
            <person name="Mammel M.K."/>
            <person name="McDermott P.F."/>
            <person name="Tartera C."/>
            <person name="White D.G."/>
            <person name="Leclerc J.E."/>
            <person name="Ravel J."/>
            <person name="Cebula T.A."/>
        </authorList>
    </citation>
    <scope>NUCLEOTIDE SEQUENCE [LARGE SCALE GENOMIC DNA]</scope>
    <source>
        <strain>SL483</strain>
    </source>
</reference>
<dbReference type="EC" id="3.1.1.85" evidence="2"/>
<dbReference type="EMBL" id="CP001138">
    <property type="protein sequence ID" value="ACH52037.1"/>
    <property type="molecule type" value="Genomic_DNA"/>
</dbReference>
<dbReference type="RefSeq" id="WP_000998147.1">
    <property type="nucleotide sequence ID" value="NC_011149.1"/>
</dbReference>
<dbReference type="SMR" id="B5F8M6"/>
<dbReference type="ESTHER" id="salty-BIOH">
    <property type="family name" value="BioH"/>
</dbReference>
<dbReference type="KEGG" id="sea:SeAg_B3711"/>
<dbReference type="HOGENOM" id="CLU_020336_12_2_6"/>
<dbReference type="UniPathway" id="UPA00078"/>
<dbReference type="Proteomes" id="UP000008819">
    <property type="component" value="Chromosome"/>
</dbReference>
<dbReference type="GO" id="GO:0005737">
    <property type="term" value="C:cytoplasm"/>
    <property type="evidence" value="ECO:0007669"/>
    <property type="project" value="UniProtKB-SubCell"/>
</dbReference>
<dbReference type="GO" id="GO:0090499">
    <property type="term" value="F:pimelyl-[acyl-carrier protein] methyl ester esterase activity"/>
    <property type="evidence" value="ECO:0007669"/>
    <property type="project" value="UniProtKB-EC"/>
</dbReference>
<dbReference type="GO" id="GO:0009102">
    <property type="term" value="P:biotin biosynthetic process"/>
    <property type="evidence" value="ECO:0007669"/>
    <property type="project" value="UniProtKB-UniRule"/>
</dbReference>
<dbReference type="FunFam" id="3.40.50.1820:FF:000045">
    <property type="entry name" value="Pimeloyl-[acyl-carrier protein] methyl ester esterase"/>
    <property type="match status" value="1"/>
</dbReference>
<dbReference type="Gene3D" id="3.40.50.1820">
    <property type="entry name" value="alpha/beta hydrolase"/>
    <property type="match status" value="1"/>
</dbReference>
<dbReference type="HAMAP" id="MF_01260">
    <property type="entry name" value="Carboxylester"/>
    <property type="match status" value="1"/>
</dbReference>
<dbReference type="InterPro" id="IPR000073">
    <property type="entry name" value="AB_hydrolase_1"/>
</dbReference>
<dbReference type="InterPro" id="IPR029058">
    <property type="entry name" value="AB_hydrolase_fold"/>
</dbReference>
<dbReference type="InterPro" id="IPR010076">
    <property type="entry name" value="BioH"/>
</dbReference>
<dbReference type="InterPro" id="IPR050228">
    <property type="entry name" value="Carboxylesterase_BioH"/>
</dbReference>
<dbReference type="NCBIfam" id="TIGR01738">
    <property type="entry name" value="bioH"/>
    <property type="match status" value="1"/>
</dbReference>
<dbReference type="NCBIfam" id="NF007674">
    <property type="entry name" value="PRK10349.1"/>
    <property type="match status" value="1"/>
</dbReference>
<dbReference type="PANTHER" id="PTHR43194">
    <property type="entry name" value="HYDROLASE ALPHA/BETA FOLD FAMILY"/>
    <property type="match status" value="1"/>
</dbReference>
<dbReference type="PANTHER" id="PTHR43194:SF5">
    <property type="entry name" value="PIMELOYL-[ACYL-CARRIER PROTEIN] METHYL ESTER ESTERASE"/>
    <property type="match status" value="1"/>
</dbReference>
<dbReference type="Pfam" id="PF00561">
    <property type="entry name" value="Abhydrolase_1"/>
    <property type="match status" value="1"/>
</dbReference>
<dbReference type="SUPFAM" id="SSF53474">
    <property type="entry name" value="alpha/beta-Hydrolases"/>
    <property type="match status" value="1"/>
</dbReference>
<gene>
    <name evidence="2" type="primary">bioH</name>
    <name type="ordered locus">SeAg_B3711</name>
</gene>
<proteinExistence type="inferred from homology"/>
<feature type="chain" id="PRO_1000139997" description="Pimeloyl-[acyl-carrier protein] methyl ester esterase">
    <location>
        <begin position="1"/>
        <end position="256"/>
    </location>
</feature>
<feature type="domain" description="AB hydrolase-1" evidence="1">
    <location>
        <begin position="15"/>
        <end position="242"/>
    </location>
</feature>
<feature type="active site" description="Nucleophile" evidence="2">
    <location>
        <position position="82"/>
    </location>
</feature>
<feature type="active site" evidence="2">
    <location>
        <position position="207"/>
    </location>
</feature>
<feature type="active site" evidence="2">
    <location>
        <position position="235"/>
    </location>
</feature>
<feature type="binding site" evidence="2">
    <location>
        <position position="22"/>
    </location>
    <ligand>
        <name>substrate</name>
    </ligand>
</feature>
<feature type="binding site" evidence="2">
    <location>
        <begin position="82"/>
        <end position="83"/>
    </location>
    <ligand>
        <name>substrate</name>
    </ligand>
</feature>
<feature type="binding site" evidence="2">
    <location>
        <begin position="143"/>
        <end position="147"/>
    </location>
    <ligand>
        <name>substrate</name>
    </ligand>
</feature>
<feature type="binding site" evidence="2">
    <location>
        <position position="235"/>
    </location>
    <ligand>
        <name>substrate</name>
    </ligand>
</feature>
<accession>B5F8M6</accession>
<name>BIOH_SALA4</name>
<organism>
    <name type="scientific">Salmonella agona (strain SL483)</name>
    <dbReference type="NCBI Taxonomy" id="454166"/>
    <lineage>
        <taxon>Bacteria</taxon>
        <taxon>Pseudomonadati</taxon>
        <taxon>Pseudomonadota</taxon>
        <taxon>Gammaproteobacteria</taxon>
        <taxon>Enterobacterales</taxon>
        <taxon>Enterobacteriaceae</taxon>
        <taxon>Salmonella</taxon>
    </lineage>
</organism>
<keyword id="KW-0093">Biotin biosynthesis</keyword>
<keyword id="KW-0963">Cytoplasm</keyword>
<keyword id="KW-0378">Hydrolase</keyword>
<keyword id="KW-0719">Serine esterase</keyword>
<protein>
    <recommendedName>
        <fullName evidence="2">Pimeloyl-[acyl-carrier protein] methyl ester esterase</fullName>
        <ecNumber evidence="2">3.1.1.85</ecNumber>
    </recommendedName>
    <alternativeName>
        <fullName evidence="2">Biotin synthesis protein BioH</fullName>
    </alternativeName>
    <alternativeName>
        <fullName evidence="2">Carboxylesterase BioH</fullName>
    </alternativeName>
</protein>